<keyword id="KW-0227">DNA damage</keyword>
<keyword id="KW-0234">DNA repair</keyword>
<reference key="1">
    <citation type="journal article" date="2008" name="Genome Res.">
        <title>Chlamydia trachomatis: genome sequence analysis of lymphogranuloma venereum isolates.</title>
        <authorList>
            <person name="Thomson N.R."/>
            <person name="Holden M.T.G."/>
            <person name="Carder C."/>
            <person name="Lennard N."/>
            <person name="Lockey S.J."/>
            <person name="Marsh P."/>
            <person name="Skipp P."/>
            <person name="O'Connor C.D."/>
            <person name="Goodhead I."/>
            <person name="Norbertzcak H."/>
            <person name="Harris B."/>
            <person name="Ormond D."/>
            <person name="Rance R."/>
            <person name="Quail M.A."/>
            <person name="Parkhill J."/>
            <person name="Stephens R.S."/>
            <person name="Clarke I.N."/>
        </authorList>
    </citation>
    <scope>NUCLEOTIDE SEQUENCE [LARGE SCALE GENOMIC DNA]</scope>
    <source>
        <strain>UCH-1/proctitis</strain>
    </source>
</reference>
<evidence type="ECO:0000255" key="1">
    <source>
        <dbReference type="HAMAP-Rule" id="MF_00149"/>
    </source>
</evidence>
<proteinExistence type="inferred from homology"/>
<name>MUTL_CHLTB</name>
<gene>
    <name evidence="1" type="primary">mutL</name>
    <name type="ordered locus">CTLon_0832</name>
</gene>
<organism>
    <name type="scientific">Chlamydia trachomatis serovar L2b (strain UCH-1/proctitis)</name>
    <dbReference type="NCBI Taxonomy" id="471473"/>
    <lineage>
        <taxon>Bacteria</taxon>
        <taxon>Pseudomonadati</taxon>
        <taxon>Chlamydiota</taxon>
        <taxon>Chlamydiia</taxon>
        <taxon>Chlamydiales</taxon>
        <taxon>Chlamydiaceae</taxon>
        <taxon>Chlamydia/Chlamydophila group</taxon>
        <taxon>Chlamydia</taxon>
    </lineage>
</organism>
<dbReference type="EMBL" id="AM884177">
    <property type="protein sequence ID" value="CAP07229.1"/>
    <property type="molecule type" value="Genomic_DNA"/>
</dbReference>
<dbReference type="RefSeq" id="WP_009873910.1">
    <property type="nucleotide sequence ID" value="NC_010280.2"/>
</dbReference>
<dbReference type="SMR" id="B0BA28"/>
<dbReference type="KEGG" id="ctl:CTLon_0832"/>
<dbReference type="HOGENOM" id="CLU_004131_4_3_0"/>
<dbReference type="Proteomes" id="UP001154401">
    <property type="component" value="Chromosome"/>
</dbReference>
<dbReference type="GO" id="GO:0032300">
    <property type="term" value="C:mismatch repair complex"/>
    <property type="evidence" value="ECO:0007669"/>
    <property type="project" value="InterPro"/>
</dbReference>
<dbReference type="GO" id="GO:0005524">
    <property type="term" value="F:ATP binding"/>
    <property type="evidence" value="ECO:0007669"/>
    <property type="project" value="InterPro"/>
</dbReference>
<dbReference type="GO" id="GO:0016887">
    <property type="term" value="F:ATP hydrolysis activity"/>
    <property type="evidence" value="ECO:0007669"/>
    <property type="project" value="InterPro"/>
</dbReference>
<dbReference type="GO" id="GO:0140664">
    <property type="term" value="F:ATP-dependent DNA damage sensor activity"/>
    <property type="evidence" value="ECO:0007669"/>
    <property type="project" value="InterPro"/>
</dbReference>
<dbReference type="GO" id="GO:0030983">
    <property type="term" value="F:mismatched DNA binding"/>
    <property type="evidence" value="ECO:0007669"/>
    <property type="project" value="InterPro"/>
</dbReference>
<dbReference type="GO" id="GO:0006298">
    <property type="term" value="P:mismatch repair"/>
    <property type="evidence" value="ECO:0007669"/>
    <property type="project" value="UniProtKB-UniRule"/>
</dbReference>
<dbReference type="CDD" id="cd16926">
    <property type="entry name" value="HATPase_MutL-MLH-PMS-like"/>
    <property type="match status" value="1"/>
</dbReference>
<dbReference type="CDD" id="cd00782">
    <property type="entry name" value="MutL_Trans"/>
    <property type="match status" value="1"/>
</dbReference>
<dbReference type="FunFam" id="3.30.565.10:FF:000003">
    <property type="entry name" value="DNA mismatch repair endonuclease MutL"/>
    <property type="match status" value="1"/>
</dbReference>
<dbReference type="Gene3D" id="3.30.230.10">
    <property type="match status" value="1"/>
</dbReference>
<dbReference type="Gene3D" id="3.30.565.10">
    <property type="entry name" value="Histidine kinase-like ATPase, C-terminal domain"/>
    <property type="match status" value="1"/>
</dbReference>
<dbReference type="Gene3D" id="3.30.1370.100">
    <property type="entry name" value="MutL, C-terminal domain, regulatory subdomain"/>
    <property type="match status" value="1"/>
</dbReference>
<dbReference type="HAMAP" id="MF_00149">
    <property type="entry name" value="DNA_mis_repair"/>
    <property type="match status" value="1"/>
</dbReference>
<dbReference type="InterPro" id="IPR014762">
    <property type="entry name" value="DNA_mismatch_repair_CS"/>
</dbReference>
<dbReference type="InterPro" id="IPR020667">
    <property type="entry name" value="DNA_mismatch_repair_MutL"/>
</dbReference>
<dbReference type="InterPro" id="IPR013507">
    <property type="entry name" value="DNA_mismatch_S5_2-like"/>
</dbReference>
<dbReference type="InterPro" id="IPR036890">
    <property type="entry name" value="HATPase_C_sf"/>
</dbReference>
<dbReference type="InterPro" id="IPR002099">
    <property type="entry name" value="MutL/Mlh/PMS"/>
</dbReference>
<dbReference type="InterPro" id="IPR038973">
    <property type="entry name" value="MutL/Mlh/Pms-like"/>
</dbReference>
<dbReference type="InterPro" id="IPR014790">
    <property type="entry name" value="MutL_C"/>
</dbReference>
<dbReference type="InterPro" id="IPR042121">
    <property type="entry name" value="MutL_C_regsub"/>
</dbReference>
<dbReference type="InterPro" id="IPR037198">
    <property type="entry name" value="MutL_C_sf"/>
</dbReference>
<dbReference type="InterPro" id="IPR020568">
    <property type="entry name" value="Ribosomal_Su5_D2-typ_SF"/>
</dbReference>
<dbReference type="InterPro" id="IPR014721">
    <property type="entry name" value="Ribsml_uS5_D2-typ_fold_subgr"/>
</dbReference>
<dbReference type="NCBIfam" id="TIGR00585">
    <property type="entry name" value="mutl"/>
    <property type="match status" value="1"/>
</dbReference>
<dbReference type="NCBIfam" id="NF000954">
    <property type="entry name" value="PRK00095.2-5"/>
    <property type="match status" value="1"/>
</dbReference>
<dbReference type="PANTHER" id="PTHR10073">
    <property type="entry name" value="DNA MISMATCH REPAIR PROTEIN MLH, PMS, MUTL"/>
    <property type="match status" value="1"/>
</dbReference>
<dbReference type="PANTHER" id="PTHR10073:SF12">
    <property type="entry name" value="DNA MISMATCH REPAIR PROTEIN MLH1"/>
    <property type="match status" value="1"/>
</dbReference>
<dbReference type="Pfam" id="PF01119">
    <property type="entry name" value="DNA_mis_repair"/>
    <property type="match status" value="1"/>
</dbReference>
<dbReference type="Pfam" id="PF13589">
    <property type="entry name" value="HATPase_c_3"/>
    <property type="match status" value="1"/>
</dbReference>
<dbReference type="Pfam" id="PF08676">
    <property type="entry name" value="MutL_C"/>
    <property type="match status" value="1"/>
</dbReference>
<dbReference type="SMART" id="SM01340">
    <property type="entry name" value="DNA_mis_repair"/>
    <property type="match status" value="1"/>
</dbReference>
<dbReference type="SMART" id="SM00853">
    <property type="entry name" value="MutL_C"/>
    <property type="match status" value="1"/>
</dbReference>
<dbReference type="SUPFAM" id="SSF55874">
    <property type="entry name" value="ATPase domain of HSP90 chaperone/DNA topoisomerase II/histidine kinase"/>
    <property type="match status" value="1"/>
</dbReference>
<dbReference type="SUPFAM" id="SSF118116">
    <property type="entry name" value="DNA mismatch repair protein MutL"/>
    <property type="match status" value="1"/>
</dbReference>
<dbReference type="SUPFAM" id="SSF54211">
    <property type="entry name" value="Ribosomal protein S5 domain 2-like"/>
    <property type="match status" value="1"/>
</dbReference>
<dbReference type="PROSITE" id="PS00058">
    <property type="entry name" value="DNA_MISMATCH_REPAIR_1"/>
    <property type="match status" value="1"/>
</dbReference>
<sequence>MSLSPSRIRLLDSVTVNQISAGEVIENAASVVKELIENSLDAGADEIHIETLGGGRGQIVVRDNGVGMDPEEVPVALQRHATSKIAHFADIFSLASYGFRGEALPSIASISKMEIHTARAGGLGSKTLIEKGEPVCCEPAPRQQGTTIAVHSLFYNVPMRQSFQKSPQMDRLAIRRLLENSVLSSEGIGWTWISERRQELHVAKKQGFIERVALVLGESFVQEAFFIDKQQGDLRVLGFLGSPNQHRSTRQGQRLFINNRAVESSFISKKVAEAYAWMIPAQRYPIFVLKLFLPPMWCDFNVHPQKTEVRLLQEGQISNLLVEAISEALLRRSSSLEEIVLKVPTEKIPIENEGISVPSIRPAIVSAPLSCPTFSQQPYLKTEMATIVSRDSASSSLSVVEKVRFLTSLGKVLLVEDSEGVHVVFVQAARKHLFYVSLLSERLESRLACQTFLLPPSVQMTKLEADFLQMRLEALTALGIELSRISPDSFAIESAPPFIQEEELKEWIVALAQEGALHVGESFEQLVENTVQKLVFSRNARAFDYAWLDILWKLGKPEKAFDGEMIRRLVLDDDFM</sequence>
<comment type="function">
    <text evidence="1">This protein is involved in the repair of mismatches in DNA. It is required for dam-dependent methyl-directed DNA mismatch repair. May act as a 'molecular matchmaker', a protein that promotes the formation of a stable complex between two or more DNA-binding proteins in an ATP-dependent manner without itself being part of a final effector complex.</text>
</comment>
<comment type="similarity">
    <text evidence="1">Belongs to the DNA mismatch repair MutL/HexB family.</text>
</comment>
<protein>
    <recommendedName>
        <fullName evidence="1">DNA mismatch repair protein MutL</fullName>
    </recommendedName>
</protein>
<accession>B0BA28</accession>
<feature type="chain" id="PRO_1000096641" description="DNA mismatch repair protein MutL">
    <location>
        <begin position="1"/>
        <end position="576"/>
    </location>
</feature>